<evidence type="ECO:0000255" key="1">
    <source>
        <dbReference type="HAMAP-Rule" id="MF_01338"/>
    </source>
</evidence>
<proteinExistence type="inferred from homology"/>
<accession>P48690</accession>
<geneLocation type="chloroplast"/>
<reference key="1">
    <citation type="journal article" date="1993" name="Genome">
        <title>The rbcL gene sequence from chestnut indicates a slow rate of evolution in the Fagaceae.</title>
        <authorList>
            <person name="Frascaria N."/>
            <person name="Maggia L."/>
            <person name="Michaud M."/>
            <person name="Bousquet J."/>
        </authorList>
    </citation>
    <scope>NUCLEOTIDE SEQUENCE [GENOMIC DNA]</scope>
    <source>
        <tissue>Embryo</tissue>
    </source>
</reference>
<sequence>MSPQTETKASVGFKAGVKDYKLTYYTPDYQTKDTDILAAFRVTPQPGVPPEEAGAAVAAESSTGTWRTVWTDGLTSLDRYKGRCYHIEPVAGEENQFIAYVAYPLDLFEEGSVTNMFTSIVGNVFGFKALRALRLEDLRIPTSYSKTFQGPPHGIQVERDKLNKYGRPLLGCTIKPKLGLSAKNYGRAVYECLRGGLDFTKDDENVNSQPFMRWRDRFLFCAEAIYKAQAETGEIKGHYLNATAGTCEEMIKRAVFARELGVPIVMHDYLTGGFTANTSLAHYCRDNGLLLHIHRAMHAVIDRQKNHGIHFRVLAKALRMSGGDHIHAGTVVGKLEGEREITLGFVDLLRDDYIEKDRSRGIYFTQDWVSLPGVLPVASGGIHVWHMPALTEIFGDDSVLQFGGGTLGHPWGNAPGAVANRVALEACVQARNEGRDLAREGNEIIREAAKWSPELAAACEVWKEIKFEFPAMDTL</sequence>
<protein>
    <recommendedName>
        <fullName evidence="1">Ribulose bisphosphate carboxylase large chain</fullName>
        <shortName evidence="1">RuBisCO large subunit</shortName>
        <ecNumber evidence="1">4.1.1.39</ecNumber>
    </recommendedName>
</protein>
<comment type="function">
    <text evidence="1">RuBisCO catalyzes two reactions: the carboxylation of D-ribulose 1,5-bisphosphate, the primary event in carbon dioxide fixation, as well as the oxidative fragmentation of the pentose substrate in the photorespiration process. Both reactions occur simultaneously and in competition at the same active site.</text>
</comment>
<comment type="catalytic activity">
    <reaction evidence="1">
        <text>2 (2R)-3-phosphoglycerate + 2 H(+) = D-ribulose 1,5-bisphosphate + CO2 + H2O</text>
        <dbReference type="Rhea" id="RHEA:23124"/>
        <dbReference type="ChEBI" id="CHEBI:15377"/>
        <dbReference type="ChEBI" id="CHEBI:15378"/>
        <dbReference type="ChEBI" id="CHEBI:16526"/>
        <dbReference type="ChEBI" id="CHEBI:57870"/>
        <dbReference type="ChEBI" id="CHEBI:58272"/>
        <dbReference type="EC" id="4.1.1.39"/>
    </reaction>
</comment>
<comment type="catalytic activity">
    <reaction evidence="1">
        <text>D-ribulose 1,5-bisphosphate + O2 = 2-phosphoglycolate + (2R)-3-phosphoglycerate + 2 H(+)</text>
        <dbReference type="Rhea" id="RHEA:36631"/>
        <dbReference type="ChEBI" id="CHEBI:15378"/>
        <dbReference type="ChEBI" id="CHEBI:15379"/>
        <dbReference type="ChEBI" id="CHEBI:57870"/>
        <dbReference type="ChEBI" id="CHEBI:58033"/>
        <dbReference type="ChEBI" id="CHEBI:58272"/>
    </reaction>
</comment>
<comment type="cofactor">
    <cofactor evidence="1">
        <name>Mg(2+)</name>
        <dbReference type="ChEBI" id="CHEBI:18420"/>
    </cofactor>
    <text evidence="1">Binds 1 Mg(2+) ion per subunit.</text>
</comment>
<comment type="subunit">
    <text evidence="1">Heterohexadecamer of 8 large chains and 8 small chains; disulfide-linked. The disulfide link is formed within the large subunit homodimers.</text>
</comment>
<comment type="subcellular location">
    <subcellularLocation>
        <location>Plastid</location>
        <location>Chloroplast</location>
    </subcellularLocation>
</comment>
<comment type="PTM">
    <text evidence="1">The disulfide bond which can form in the large chain dimeric partners within the hexadecamer appears to be associated with oxidative stress and protein turnover.</text>
</comment>
<comment type="miscellaneous">
    <text evidence="1">The basic functional RuBisCO is composed of a large chain homodimer in a 'head-to-tail' conformation. In form I RuBisCO this homodimer is arranged in a barrel-like tetramer with the small subunits forming a tetrameric 'cap' on each end of the 'barrel'.</text>
</comment>
<comment type="similarity">
    <text evidence="1">Belongs to the RuBisCO large chain family. Type I subfamily.</text>
</comment>
<feature type="propeptide" id="PRO_0000031163" evidence="1">
    <location>
        <begin position="1"/>
        <end position="2"/>
    </location>
</feature>
<feature type="chain" id="PRO_0000031164" description="Ribulose bisphosphate carboxylase large chain">
    <location>
        <begin position="3"/>
        <end position="475"/>
    </location>
</feature>
<feature type="active site" description="Proton acceptor" evidence="1">
    <location>
        <position position="175"/>
    </location>
</feature>
<feature type="active site" description="Proton acceptor" evidence="1">
    <location>
        <position position="294"/>
    </location>
</feature>
<feature type="binding site" description="in homodimeric partner" evidence="1">
    <location>
        <position position="123"/>
    </location>
    <ligand>
        <name>substrate</name>
    </ligand>
</feature>
<feature type="binding site" evidence="1">
    <location>
        <position position="173"/>
    </location>
    <ligand>
        <name>substrate</name>
    </ligand>
</feature>
<feature type="binding site" evidence="1">
    <location>
        <position position="177"/>
    </location>
    <ligand>
        <name>substrate</name>
    </ligand>
</feature>
<feature type="binding site" description="via carbamate group" evidence="1">
    <location>
        <position position="201"/>
    </location>
    <ligand>
        <name>Mg(2+)</name>
        <dbReference type="ChEBI" id="CHEBI:18420"/>
    </ligand>
</feature>
<feature type="binding site" evidence="1">
    <location>
        <position position="203"/>
    </location>
    <ligand>
        <name>Mg(2+)</name>
        <dbReference type="ChEBI" id="CHEBI:18420"/>
    </ligand>
</feature>
<feature type="binding site" evidence="1">
    <location>
        <position position="204"/>
    </location>
    <ligand>
        <name>Mg(2+)</name>
        <dbReference type="ChEBI" id="CHEBI:18420"/>
    </ligand>
</feature>
<feature type="binding site" evidence="1">
    <location>
        <position position="295"/>
    </location>
    <ligand>
        <name>substrate</name>
    </ligand>
</feature>
<feature type="binding site" evidence="1">
    <location>
        <position position="327"/>
    </location>
    <ligand>
        <name>substrate</name>
    </ligand>
</feature>
<feature type="binding site" evidence="1">
    <location>
        <position position="379"/>
    </location>
    <ligand>
        <name>substrate</name>
    </ligand>
</feature>
<feature type="site" description="Transition state stabilizer" evidence="1">
    <location>
        <position position="334"/>
    </location>
</feature>
<feature type="modified residue" description="N-acetylproline" evidence="1">
    <location>
        <position position="3"/>
    </location>
</feature>
<feature type="modified residue" description="N6,N6,N6-trimethyllysine" evidence="1">
    <location>
        <position position="14"/>
    </location>
</feature>
<feature type="modified residue" description="N6-carboxylysine" evidence="1">
    <location>
        <position position="201"/>
    </location>
</feature>
<feature type="disulfide bond" description="Interchain; in linked form" evidence="1">
    <location>
        <position position="247"/>
    </location>
</feature>
<organism>
    <name type="scientific">Castanea sativa</name>
    <name type="common">Sweet chestnut</name>
    <dbReference type="NCBI Taxonomy" id="21020"/>
    <lineage>
        <taxon>Eukaryota</taxon>
        <taxon>Viridiplantae</taxon>
        <taxon>Streptophyta</taxon>
        <taxon>Embryophyta</taxon>
        <taxon>Tracheophyta</taxon>
        <taxon>Spermatophyta</taxon>
        <taxon>Magnoliopsida</taxon>
        <taxon>eudicotyledons</taxon>
        <taxon>Gunneridae</taxon>
        <taxon>Pentapetalae</taxon>
        <taxon>rosids</taxon>
        <taxon>fabids</taxon>
        <taxon>Fagales</taxon>
        <taxon>Fagaceae</taxon>
        <taxon>Castanea</taxon>
    </lineage>
</organism>
<name>RBL_CASSA</name>
<dbReference type="EC" id="4.1.1.39" evidence="1"/>
<dbReference type="EMBL" id="M94936">
    <property type="protein sequence ID" value="AAB01600.1"/>
    <property type="molecule type" value="Genomic_DNA"/>
</dbReference>
<dbReference type="SMR" id="P48690"/>
<dbReference type="GO" id="GO:0009507">
    <property type="term" value="C:chloroplast"/>
    <property type="evidence" value="ECO:0007669"/>
    <property type="project" value="UniProtKB-SubCell"/>
</dbReference>
<dbReference type="GO" id="GO:0000287">
    <property type="term" value="F:magnesium ion binding"/>
    <property type="evidence" value="ECO:0007669"/>
    <property type="project" value="UniProtKB-UniRule"/>
</dbReference>
<dbReference type="GO" id="GO:0004497">
    <property type="term" value="F:monooxygenase activity"/>
    <property type="evidence" value="ECO:0007669"/>
    <property type="project" value="UniProtKB-KW"/>
</dbReference>
<dbReference type="GO" id="GO:0016984">
    <property type="term" value="F:ribulose-bisphosphate carboxylase activity"/>
    <property type="evidence" value="ECO:0007669"/>
    <property type="project" value="UniProtKB-UniRule"/>
</dbReference>
<dbReference type="GO" id="GO:0009853">
    <property type="term" value="P:photorespiration"/>
    <property type="evidence" value="ECO:0007669"/>
    <property type="project" value="UniProtKB-KW"/>
</dbReference>
<dbReference type="GO" id="GO:0019253">
    <property type="term" value="P:reductive pentose-phosphate cycle"/>
    <property type="evidence" value="ECO:0007669"/>
    <property type="project" value="UniProtKB-UniRule"/>
</dbReference>
<dbReference type="CDD" id="cd08212">
    <property type="entry name" value="RuBisCO_large_I"/>
    <property type="match status" value="1"/>
</dbReference>
<dbReference type="FunFam" id="3.20.20.110:FF:000001">
    <property type="entry name" value="Ribulose bisphosphate carboxylase large chain"/>
    <property type="match status" value="1"/>
</dbReference>
<dbReference type="FunFam" id="3.30.70.150:FF:000001">
    <property type="entry name" value="Ribulose bisphosphate carboxylase large chain"/>
    <property type="match status" value="1"/>
</dbReference>
<dbReference type="Gene3D" id="3.20.20.110">
    <property type="entry name" value="Ribulose bisphosphate carboxylase, large subunit, C-terminal domain"/>
    <property type="match status" value="1"/>
</dbReference>
<dbReference type="Gene3D" id="3.30.70.150">
    <property type="entry name" value="RuBisCO large subunit, N-terminal domain"/>
    <property type="match status" value="1"/>
</dbReference>
<dbReference type="HAMAP" id="MF_01338">
    <property type="entry name" value="RuBisCO_L_type1"/>
    <property type="match status" value="1"/>
</dbReference>
<dbReference type="InterPro" id="IPR033966">
    <property type="entry name" value="RuBisCO"/>
</dbReference>
<dbReference type="InterPro" id="IPR020878">
    <property type="entry name" value="RuBisCo_large_chain_AS"/>
</dbReference>
<dbReference type="InterPro" id="IPR000685">
    <property type="entry name" value="RuBisCO_lsu_C"/>
</dbReference>
<dbReference type="InterPro" id="IPR036376">
    <property type="entry name" value="RuBisCO_lsu_C_sf"/>
</dbReference>
<dbReference type="InterPro" id="IPR017443">
    <property type="entry name" value="RuBisCO_lsu_fd_N"/>
</dbReference>
<dbReference type="InterPro" id="IPR036422">
    <property type="entry name" value="RuBisCO_lsu_N_sf"/>
</dbReference>
<dbReference type="InterPro" id="IPR020888">
    <property type="entry name" value="RuBisCO_lsuI"/>
</dbReference>
<dbReference type="NCBIfam" id="NF003252">
    <property type="entry name" value="PRK04208.1"/>
    <property type="match status" value="1"/>
</dbReference>
<dbReference type="PANTHER" id="PTHR42704">
    <property type="entry name" value="RIBULOSE BISPHOSPHATE CARBOXYLASE"/>
    <property type="match status" value="1"/>
</dbReference>
<dbReference type="PANTHER" id="PTHR42704:SF15">
    <property type="entry name" value="RIBULOSE BISPHOSPHATE CARBOXYLASE LARGE CHAIN"/>
    <property type="match status" value="1"/>
</dbReference>
<dbReference type="Pfam" id="PF00016">
    <property type="entry name" value="RuBisCO_large"/>
    <property type="match status" value="1"/>
</dbReference>
<dbReference type="Pfam" id="PF02788">
    <property type="entry name" value="RuBisCO_large_N"/>
    <property type="match status" value="1"/>
</dbReference>
<dbReference type="SFLD" id="SFLDG01052">
    <property type="entry name" value="RuBisCO"/>
    <property type="match status" value="1"/>
</dbReference>
<dbReference type="SFLD" id="SFLDS00014">
    <property type="entry name" value="RuBisCO"/>
    <property type="match status" value="1"/>
</dbReference>
<dbReference type="SFLD" id="SFLDG00301">
    <property type="entry name" value="RuBisCO-like_proteins"/>
    <property type="match status" value="1"/>
</dbReference>
<dbReference type="SUPFAM" id="SSF51649">
    <property type="entry name" value="RuBisCo, C-terminal domain"/>
    <property type="match status" value="1"/>
</dbReference>
<dbReference type="SUPFAM" id="SSF54966">
    <property type="entry name" value="RuBisCO, large subunit, small (N-terminal) domain"/>
    <property type="match status" value="1"/>
</dbReference>
<dbReference type="PROSITE" id="PS00157">
    <property type="entry name" value="RUBISCO_LARGE"/>
    <property type="match status" value="1"/>
</dbReference>
<gene>
    <name evidence="1" type="primary">rbcL</name>
</gene>
<keyword id="KW-0007">Acetylation</keyword>
<keyword id="KW-0113">Calvin cycle</keyword>
<keyword id="KW-0120">Carbon dioxide fixation</keyword>
<keyword id="KW-0150">Chloroplast</keyword>
<keyword id="KW-1015">Disulfide bond</keyword>
<keyword id="KW-0456">Lyase</keyword>
<keyword id="KW-0460">Magnesium</keyword>
<keyword id="KW-0479">Metal-binding</keyword>
<keyword id="KW-0488">Methylation</keyword>
<keyword id="KW-0503">Monooxygenase</keyword>
<keyword id="KW-0560">Oxidoreductase</keyword>
<keyword id="KW-0601">Photorespiration</keyword>
<keyword id="KW-0602">Photosynthesis</keyword>
<keyword id="KW-0934">Plastid</keyword>